<keyword id="KW-0325">Glycoprotein</keyword>
<keyword id="KW-0378">Hydrolase</keyword>
<keyword id="KW-0408">Iron</keyword>
<keyword id="KW-0479">Metal-binding</keyword>
<keyword id="KW-1185">Reference proteome</keyword>
<keyword id="KW-0964">Secreted</keyword>
<keyword id="KW-0732">Signal</keyword>
<keyword id="KW-0862">Zinc</keyword>
<sequence>MAAAPPPPPPLLLLLLCVCAVFADVPIGTQPEQVHISYPGVQNSMLVTWSSANKTDSVVEYGLWGGKLFSHSATGNSSIFINEGAEYRVMYIHRVLLTDLRPAASYVYHCGSGAGWSELFFFTALNESVFFSPGFALFGDLGNENPQSLSRLQKETQIGTYDVILHIGDFAYDLYEDNGRIGDEFMKQIQSIAAYVPYMTCPGNHEWAFNFSQYRARFSMPGDTEGLWYSWNVGPAHIISFSTEVYFYYLEYGLDLLFRQYEWLRADLQEANRPENRAERPWIITMGHRPMYCSNDDDDDCTHFQSYVRLGRNDTKPPAPGLEELFYQYGVDLELWAHEHTYERLWPVYDYKVFNGSSEEPYVNPKAPVHIITGSAGCREKHDGFIPKPRDWSAFRSTDYGYTRLQLINNTHLYLEQVSDDQYGKVIDQMTLVKEKHGPDAWR</sequence>
<evidence type="ECO:0000250" key="1"/>
<evidence type="ECO:0000250" key="2">
    <source>
        <dbReference type="UniProtKB" id="Q6ZNF0"/>
    </source>
</evidence>
<evidence type="ECO:0000255" key="3"/>
<evidence type="ECO:0000305" key="4"/>
<dbReference type="EC" id="3.1.3.2"/>
<dbReference type="EMBL" id="BC139891">
    <property type="protein sequence ID" value="AAI39892.1"/>
    <property type="molecule type" value="mRNA"/>
</dbReference>
<dbReference type="RefSeq" id="NP_001092720.1">
    <property type="nucleotide sequence ID" value="NM_001099250.1"/>
</dbReference>
<dbReference type="SMR" id="A5D6U8"/>
<dbReference type="FunCoup" id="A5D6U8">
    <property type="interactions" value="830"/>
</dbReference>
<dbReference type="STRING" id="7955.ENSDARP00000141174"/>
<dbReference type="GlyCosmos" id="A5D6U8">
    <property type="glycosylation" value="7 sites, No reported glycans"/>
</dbReference>
<dbReference type="PaxDb" id="7955-ENSDARP00000087672"/>
<dbReference type="GeneID" id="571830"/>
<dbReference type="KEGG" id="dre:571830"/>
<dbReference type="AGR" id="ZFIN:ZDB-GENE-070615-9"/>
<dbReference type="CTD" id="390928"/>
<dbReference type="ZFIN" id="ZDB-GENE-070615-9">
    <property type="gene designation" value="acp7"/>
</dbReference>
<dbReference type="eggNOG" id="KOG1378">
    <property type="taxonomic scope" value="Eukaryota"/>
</dbReference>
<dbReference type="InParanoid" id="A5D6U8"/>
<dbReference type="OrthoDB" id="45007at2759"/>
<dbReference type="PhylomeDB" id="A5D6U8"/>
<dbReference type="PRO" id="PR:A5D6U8"/>
<dbReference type="Proteomes" id="UP000000437">
    <property type="component" value="Unplaced"/>
</dbReference>
<dbReference type="GO" id="GO:0005576">
    <property type="term" value="C:extracellular region"/>
    <property type="evidence" value="ECO:0007669"/>
    <property type="project" value="UniProtKB-SubCell"/>
</dbReference>
<dbReference type="GO" id="GO:0003993">
    <property type="term" value="F:acid phosphatase activity"/>
    <property type="evidence" value="ECO:0007669"/>
    <property type="project" value="UniProtKB-EC"/>
</dbReference>
<dbReference type="GO" id="GO:0046872">
    <property type="term" value="F:metal ion binding"/>
    <property type="evidence" value="ECO:0007669"/>
    <property type="project" value="UniProtKB-KW"/>
</dbReference>
<dbReference type="CDD" id="cd00839">
    <property type="entry name" value="MPP_PAPs"/>
    <property type="match status" value="1"/>
</dbReference>
<dbReference type="Gene3D" id="3.60.21.10">
    <property type="match status" value="1"/>
</dbReference>
<dbReference type="Gene3D" id="2.60.40.380">
    <property type="entry name" value="Purple acid phosphatase-like, N-terminal"/>
    <property type="match status" value="1"/>
</dbReference>
<dbReference type="InterPro" id="IPR004843">
    <property type="entry name" value="Calcineurin-like_PHP_ApaH"/>
</dbReference>
<dbReference type="InterPro" id="IPR029052">
    <property type="entry name" value="Metallo-depent_PP-like"/>
</dbReference>
<dbReference type="InterPro" id="IPR041792">
    <property type="entry name" value="MPP_PAP"/>
</dbReference>
<dbReference type="InterPro" id="IPR008963">
    <property type="entry name" value="Purple_acid_Pase-like_N"/>
</dbReference>
<dbReference type="InterPro" id="IPR015914">
    <property type="entry name" value="Purple_acid_Pase_N"/>
</dbReference>
<dbReference type="InterPro" id="IPR025733">
    <property type="entry name" value="Purple_acid_PPase_C_dom"/>
</dbReference>
<dbReference type="PANTHER" id="PTHR45867:SF3">
    <property type="entry name" value="ACID PHOSPHATASE TYPE 7"/>
    <property type="match status" value="1"/>
</dbReference>
<dbReference type="PANTHER" id="PTHR45867">
    <property type="entry name" value="PURPLE ACID PHOSPHATASE"/>
    <property type="match status" value="1"/>
</dbReference>
<dbReference type="Pfam" id="PF00149">
    <property type="entry name" value="Metallophos"/>
    <property type="match status" value="1"/>
</dbReference>
<dbReference type="Pfam" id="PF14008">
    <property type="entry name" value="Metallophos_C"/>
    <property type="match status" value="1"/>
</dbReference>
<dbReference type="Pfam" id="PF16656">
    <property type="entry name" value="Pur_ac_phosph_N"/>
    <property type="match status" value="1"/>
</dbReference>
<dbReference type="SUPFAM" id="SSF56300">
    <property type="entry name" value="Metallo-dependent phosphatases"/>
    <property type="match status" value="1"/>
</dbReference>
<dbReference type="SUPFAM" id="SSF49363">
    <property type="entry name" value="Purple acid phosphatase, N-terminal domain"/>
    <property type="match status" value="1"/>
</dbReference>
<feature type="signal peptide" evidence="3">
    <location>
        <begin position="1"/>
        <end position="23"/>
    </location>
</feature>
<feature type="chain" id="PRO_0000316826" description="Acid phosphatase type 7">
    <location>
        <begin position="24"/>
        <end position="443"/>
    </location>
</feature>
<feature type="binding site" evidence="1">
    <location>
        <position position="140"/>
    </location>
    <ligand>
        <name>Fe cation</name>
        <dbReference type="ChEBI" id="CHEBI:24875"/>
    </ligand>
</feature>
<feature type="binding site" evidence="1">
    <location>
        <position position="169"/>
    </location>
    <ligand>
        <name>Fe cation</name>
        <dbReference type="ChEBI" id="CHEBI:24875"/>
    </ligand>
</feature>
<feature type="binding site" evidence="1">
    <location>
        <position position="169"/>
    </location>
    <ligand>
        <name>Zn(2+)</name>
        <dbReference type="ChEBI" id="CHEBI:29105"/>
    </ligand>
</feature>
<feature type="binding site" evidence="1">
    <location>
        <position position="172"/>
    </location>
    <ligand>
        <name>Fe cation</name>
        <dbReference type="ChEBI" id="CHEBI:24875"/>
    </ligand>
</feature>
<feature type="binding site" evidence="1">
    <location>
        <position position="204"/>
    </location>
    <ligand>
        <name>Zn(2+)</name>
        <dbReference type="ChEBI" id="CHEBI:29105"/>
    </ligand>
</feature>
<feature type="binding site" evidence="1">
    <location>
        <position position="288"/>
    </location>
    <ligand>
        <name>Zn(2+)</name>
        <dbReference type="ChEBI" id="CHEBI:29105"/>
    </ligand>
</feature>
<feature type="binding site" evidence="1">
    <location>
        <position position="338"/>
    </location>
    <ligand>
        <name>Zn(2+)</name>
        <dbReference type="ChEBI" id="CHEBI:29105"/>
    </ligand>
</feature>
<feature type="binding site" evidence="1">
    <location>
        <position position="340"/>
    </location>
    <ligand>
        <name>Fe cation</name>
        <dbReference type="ChEBI" id="CHEBI:24875"/>
    </ligand>
</feature>
<feature type="glycosylation site" description="N-linked (GlcNAc...) asparagine" evidence="3">
    <location>
        <position position="53"/>
    </location>
</feature>
<feature type="glycosylation site" description="N-linked (GlcNAc...) asparagine" evidence="3">
    <location>
        <position position="76"/>
    </location>
</feature>
<feature type="glycosylation site" description="N-linked (GlcNAc...) asparagine" evidence="3">
    <location>
        <position position="126"/>
    </location>
</feature>
<feature type="glycosylation site" description="N-linked (GlcNAc...) asparagine" evidence="3">
    <location>
        <position position="210"/>
    </location>
</feature>
<feature type="glycosylation site" description="N-linked (GlcNAc...) asparagine" evidence="3">
    <location>
        <position position="313"/>
    </location>
</feature>
<feature type="glycosylation site" description="N-linked (GlcNAc...) asparagine" evidence="3">
    <location>
        <position position="355"/>
    </location>
</feature>
<feature type="glycosylation site" description="N-linked (GlcNAc...) asparagine" evidence="3">
    <location>
        <position position="409"/>
    </location>
</feature>
<proteinExistence type="evidence at transcript level"/>
<comment type="catalytic activity">
    <reaction>
        <text>a phosphate monoester + H2O = an alcohol + phosphate</text>
        <dbReference type="Rhea" id="RHEA:15017"/>
        <dbReference type="ChEBI" id="CHEBI:15377"/>
        <dbReference type="ChEBI" id="CHEBI:30879"/>
        <dbReference type="ChEBI" id="CHEBI:43474"/>
        <dbReference type="ChEBI" id="CHEBI:67140"/>
        <dbReference type="EC" id="3.1.3.2"/>
    </reaction>
</comment>
<comment type="cofactor">
    <cofactor evidence="1">
        <name>Fe cation</name>
        <dbReference type="ChEBI" id="CHEBI:24875"/>
    </cofactor>
    <text evidence="1">Binds 1 Fe cation per subunit.</text>
</comment>
<comment type="cofactor">
    <cofactor evidence="1">
        <name>Zn(2+)</name>
        <dbReference type="ChEBI" id="CHEBI:29105"/>
    </cofactor>
    <text evidence="1">Binds 1 zinc ion per subunit.</text>
</comment>
<comment type="subcellular location">
    <subcellularLocation>
        <location evidence="4">Secreted</location>
    </subcellularLocation>
</comment>
<comment type="similarity">
    <text evidence="4">Belongs to the metallophosphoesterase superfamily. Purple acid phosphatase family.</text>
</comment>
<gene>
    <name evidence="2" type="primary">acp7</name>
    <name evidence="2" type="synonym">papl</name>
    <name type="ORF">zgc:162913</name>
</gene>
<name>ACP7_DANRE</name>
<accession>A5D6U8</accession>
<reference key="1">
    <citation type="submission" date="2007-04" db="EMBL/GenBank/DDBJ databases">
        <authorList>
            <consortium name="NIH - Zebrafish Gene Collection (ZGC) project"/>
        </authorList>
    </citation>
    <scope>NUCLEOTIDE SEQUENCE [LARGE SCALE MRNA]</scope>
    <source>
        <tissue>Olfactory epithelium</tissue>
    </source>
</reference>
<organism>
    <name type="scientific">Danio rerio</name>
    <name type="common">Zebrafish</name>
    <name type="synonym">Brachydanio rerio</name>
    <dbReference type="NCBI Taxonomy" id="7955"/>
    <lineage>
        <taxon>Eukaryota</taxon>
        <taxon>Metazoa</taxon>
        <taxon>Chordata</taxon>
        <taxon>Craniata</taxon>
        <taxon>Vertebrata</taxon>
        <taxon>Euteleostomi</taxon>
        <taxon>Actinopterygii</taxon>
        <taxon>Neopterygii</taxon>
        <taxon>Teleostei</taxon>
        <taxon>Ostariophysi</taxon>
        <taxon>Cypriniformes</taxon>
        <taxon>Danionidae</taxon>
        <taxon>Danioninae</taxon>
        <taxon>Danio</taxon>
    </lineage>
</organism>
<protein>
    <recommendedName>
        <fullName evidence="4">Acid phosphatase type 7</fullName>
        <ecNumber>3.1.3.2</ecNumber>
    </recommendedName>
    <alternativeName>
        <fullName evidence="2">Purple acid phosphatase long form</fullName>
    </alternativeName>
</protein>